<keyword id="KW-1185">Reference proteome</keyword>
<keyword id="KW-0694">RNA-binding</keyword>
<keyword id="KW-0346">Stress response</keyword>
<sequence>MNNKSTNNLQDIFLNSARKNKIPVAIHLTNGFQMRGSVKGFDSFTVILESDGKQMMIYKHAVSTITPLRPILFNQPQQDEE</sequence>
<dbReference type="EMBL" id="AE001437">
    <property type="protein sequence ID" value="AAK79798.1"/>
    <property type="molecule type" value="Genomic_DNA"/>
</dbReference>
<dbReference type="PIR" id="C97126">
    <property type="entry name" value="C97126"/>
</dbReference>
<dbReference type="RefSeq" id="NP_348458.1">
    <property type="nucleotide sequence ID" value="NC_003030.1"/>
</dbReference>
<dbReference type="RefSeq" id="WP_010965139.1">
    <property type="nucleotide sequence ID" value="NC_003030.1"/>
</dbReference>
<dbReference type="SMR" id="P58243"/>
<dbReference type="STRING" id="272562.CA_C1834"/>
<dbReference type="GeneID" id="44998327"/>
<dbReference type="KEGG" id="cac:CA_C1834"/>
<dbReference type="PATRIC" id="fig|272562.8.peg.2039"/>
<dbReference type="eggNOG" id="COG1923">
    <property type="taxonomic scope" value="Bacteria"/>
</dbReference>
<dbReference type="HOGENOM" id="CLU_113688_0_2_9"/>
<dbReference type="OrthoDB" id="9799751at2"/>
<dbReference type="Proteomes" id="UP000000814">
    <property type="component" value="Chromosome"/>
</dbReference>
<dbReference type="GO" id="GO:0005829">
    <property type="term" value="C:cytosol"/>
    <property type="evidence" value="ECO:0007669"/>
    <property type="project" value="TreeGrafter"/>
</dbReference>
<dbReference type="GO" id="GO:0003723">
    <property type="term" value="F:RNA binding"/>
    <property type="evidence" value="ECO:0007669"/>
    <property type="project" value="UniProtKB-UniRule"/>
</dbReference>
<dbReference type="GO" id="GO:0006355">
    <property type="term" value="P:regulation of DNA-templated transcription"/>
    <property type="evidence" value="ECO:0007669"/>
    <property type="project" value="InterPro"/>
</dbReference>
<dbReference type="GO" id="GO:0043487">
    <property type="term" value="P:regulation of RNA stability"/>
    <property type="evidence" value="ECO:0007669"/>
    <property type="project" value="TreeGrafter"/>
</dbReference>
<dbReference type="GO" id="GO:0045974">
    <property type="term" value="P:regulation of translation, ncRNA-mediated"/>
    <property type="evidence" value="ECO:0007669"/>
    <property type="project" value="TreeGrafter"/>
</dbReference>
<dbReference type="CDD" id="cd01716">
    <property type="entry name" value="Hfq"/>
    <property type="match status" value="1"/>
</dbReference>
<dbReference type="Gene3D" id="2.30.30.100">
    <property type="match status" value="1"/>
</dbReference>
<dbReference type="HAMAP" id="MF_00436">
    <property type="entry name" value="Hfq"/>
    <property type="match status" value="1"/>
</dbReference>
<dbReference type="InterPro" id="IPR005001">
    <property type="entry name" value="Hfq"/>
</dbReference>
<dbReference type="InterPro" id="IPR010920">
    <property type="entry name" value="LSM_dom_sf"/>
</dbReference>
<dbReference type="InterPro" id="IPR047575">
    <property type="entry name" value="Sm"/>
</dbReference>
<dbReference type="NCBIfam" id="TIGR02383">
    <property type="entry name" value="Hfq"/>
    <property type="match status" value="1"/>
</dbReference>
<dbReference type="NCBIfam" id="NF001602">
    <property type="entry name" value="PRK00395.1"/>
    <property type="match status" value="1"/>
</dbReference>
<dbReference type="PANTHER" id="PTHR34772">
    <property type="entry name" value="RNA-BINDING PROTEIN HFQ"/>
    <property type="match status" value="1"/>
</dbReference>
<dbReference type="PANTHER" id="PTHR34772:SF1">
    <property type="entry name" value="RNA-BINDING PROTEIN HFQ"/>
    <property type="match status" value="1"/>
</dbReference>
<dbReference type="Pfam" id="PF17209">
    <property type="entry name" value="Hfq"/>
    <property type="match status" value="1"/>
</dbReference>
<dbReference type="SUPFAM" id="SSF50182">
    <property type="entry name" value="Sm-like ribonucleoproteins"/>
    <property type="match status" value="1"/>
</dbReference>
<dbReference type="PROSITE" id="PS52002">
    <property type="entry name" value="SM"/>
    <property type="match status" value="1"/>
</dbReference>
<gene>
    <name evidence="1" type="primary">hfq</name>
    <name type="ordered locus">CA_C1834</name>
</gene>
<comment type="function">
    <text evidence="1">RNA chaperone that binds small regulatory RNA (sRNAs) and mRNAs to facilitate mRNA translational regulation in response to envelope stress, environmental stress and changes in metabolite concentrations. Also binds with high specificity to tRNAs.</text>
</comment>
<comment type="subunit">
    <text evidence="1">Homohexamer.</text>
</comment>
<comment type="similarity">
    <text evidence="1">Belongs to the Hfq family.</text>
</comment>
<name>HFQ_CLOAB</name>
<protein>
    <recommendedName>
        <fullName evidence="1">RNA-binding protein Hfq</fullName>
    </recommendedName>
</protein>
<organism>
    <name type="scientific">Clostridium acetobutylicum (strain ATCC 824 / DSM 792 / JCM 1419 / IAM 19013 / LMG 5710 / NBRC 13948 / NRRL B-527 / VKM B-1787 / 2291 / W)</name>
    <dbReference type="NCBI Taxonomy" id="272562"/>
    <lineage>
        <taxon>Bacteria</taxon>
        <taxon>Bacillati</taxon>
        <taxon>Bacillota</taxon>
        <taxon>Clostridia</taxon>
        <taxon>Eubacteriales</taxon>
        <taxon>Clostridiaceae</taxon>
        <taxon>Clostridium</taxon>
    </lineage>
</organism>
<feature type="chain" id="PRO_0000095635" description="RNA-binding protein Hfq">
    <location>
        <begin position="1"/>
        <end position="81"/>
    </location>
</feature>
<feature type="domain" description="Sm" evidence="2">
    <location>
        <begin position="11"/>
        <end position="71"/>
    </location>
</feature>
<proteinExistence type="inferred from homology"/>
<accession>P58243</accession>
<evidence type="ECO:0000255" key="1">
    <source>
        <dbReference type="HAMAP-Rule" id="MF_00436"/>
    </source>
</evidence>
<evidence type="ECO:0000255" key="2">
    <source>
        <dbReference type="PROSITE-ProRule" id="PRU01346"/>
    </source>
</evidence>
<reference key="1">
    <citation type="journal article" date="2001" name="J. Bacteriol.">
        <title>Genome sequence and comparative analysis of the solvent-producing bacterium Clostridium acetobutylicum.</title>
        <authorList>
            <person name="Noelling J."/>
            <person name="Breton G."/>
            <person name="Omelchenko M.V."/>
            <person name="Makarova K.S."/>
            <person name="Zeng Q."/>
            <person name="Gibson R."/>
            <person name="Lee H.M."/>
            <person name="Dubois J."/>
            <person name="Qiu D."/>
            <person name="Hitti J."/>
            <person name="Wolf Y.I."/>
            <person name="Tatusov R.L."/>
            <person name="Sabathe F."/>
            <person name="Doucette-Stamm L.A."/>
            <person name="Soucaille P."/>
            <person name="Daly M.J."/>
            <person name="Bennett G.N."/>
            <person name="Koonin E.V."/>
            <person name="Smith D.R."/>
        </authorList>
    </citation>
    <scope>NUCLEOTIDE SEQUENCE [LARGE SCALE GENOMIC DNA]</scope>
    <source>
        <strain>ATCC 824 / DSM 792 / JCM 1419 / IAM 19013 / LMG 5710 / NBRC 13948 / NRRL B-527 / VKM B-1787 / 2291 / W</strain>
    </source>
</reference>